<sequence length="312" mass="34785">MRVILAPMQGVLDPFVRQLLTQVNQYDLCVSEFVRVVDQLLPTKVFYRLCPELYQQGLTASGTPVRVQLLGQHPQWLAENAQRAIELGSHGIDLNCGCPSKTVNGSNGGASLLKQPELIYHATKALRAAVPKALPVSVKVRLGWDNSEQAFEIADAVQQGGATEITIHGRTKMDGYRADRINWAKINDVRQRLSIPVIANGEIWDWQSGQACLAETGCQDLMIGRGALNIPNLSQVVKFNQAKMPWAEVLILLHQYAHTENQFDTGFYHVARIKQWLGYLKKAYPQADALFQLIKTCHDGQALRMKIDGVMN</sequence>
<evidence type="ECO:0000255" key="1">
    <source>
        <dbReference type="HAMAP-Rule" id="MF_02043"/>
    </source>
</evidence>
<keyword id="KW-0285">Flavoprotein</keyword>
<keyword id="KW-0288">FMN</keyword>
<keyword id="KW-0521">NADP</keyword>
<keyword id="KW-0560">Oxidoreductase</keyword>
<keyword id="KW-1185">Reference proteome</keyword>
<keyword id="KW-0694">RNA-binding</keyword>
<keyword id="KW-0819">tRNA processing</keyword>
<keyword id="KW-0820">tRNA-binding</keyword>
<organism>
    <name type="scientific">Pasteurella multocida (strain Pm70)</name>
    <dbReference type="NCBI Taxonomy" id="272843"/>
    <lineage>
        <taxon>Bacteria</taxon>
        <taxon>Pseudomonadati</taxon>
        <taxon>Pseudomonadota</taxon>
        <taxon>Gammaproteobacteria</taxon>
        <taxon>Pasteurellales</taxon>
        <taxon>Pasteurellaceae</taxon>
        <taxon>Pasteurella</taxon>
    </lineage>
</organism>
<accession>Q9CJW1</accession>
<reference key="1">
    <citation type="journal article" date="2001" name="Proc. Natl. Acad. Sci. U.S.A.">
        <title>Complete genomic sequence of Pasteurella multocida Pm70.</title>
        <authorList>
            <person name="May B.J."/>
            <person name="Zhang Q."/>
            <person name="Li L.L."/>
            <person name="Paustian M.L."/>
            <person name="Whittam T.S."/>
            <person name="Kapur V."/>
        </authorList>
    </citation>
    <scope>NUCLEOTIDE SEQUENCE [LARGE SCALE GENOMIC DNA]</scope>
    <source>
        <strain>Pm70</strain>
    </source>
</reference>
<gene>
    <name evidence="1" type="primary">dusC</name>
    <name type="ordered locus">PM1880</name>
</gene>
<protein>
    <recommendedName>
        <fullName evidence="1">tRNA-dihydrouridine(16) synthase</fullName>
        <ecNumber evidence="1">1.3.1.-</ecNumber>
    </recommendedName>
    <alternativeName>
        <fullName evidence="1">U16-specific dihydrouridine synthase</fullName>
        <shortName evidence="1">U16-specific Dus</shortName>
    </alternativeName>
    <alternativeName>
        <fullName evidence="1">tRNA-dihydrouridine synthase C</fullName>
    </alternativeName>
</protein>
<proteinExistence type="inferred from homology"/>
<feature type="chain" id="PRO_0000162116" description="tRNA-dihydrouridine(16) synthase">
    <location>
        <begin position="1"/>
        <end position="312"/>
    </location>
</feature>
<feature type="active site" description="Proton donor" evidence="1">
    <location>
        <position position="98"/>
    </location>
</feature>
<feature type="binding site" evidence="1">
    <location>
        <begin position="7"/>
        <end position="9"/>
    </location>
    <ligand>
        <name>FMN</name>
        <dbReference type="ChEBI" id="CHEBI:58210"/>
    </ligand>
</feature>
<feature type="binding site" evidence="1">
    <location>
        <position position="68"/>
    </location>
    <ligand>
        <name>FMN</name>
        <dbReference type="ChEBI" id="CHEBI:58210"/>
    </ligand>
</feature>
<feature type="binding site" evidence="1">
    <location>
        <position position="139"/>
    </location>
    <ligand>
        <name>FMN</name>
        <dbReference type="ChEBI" id="CHEBI:58210"/>
    </ligand>
</feature>
<feature type="binding site" evidence="1">
    <location>
        <begin position="200"/>
        <end position="202"/>
    </location>
    <ligand>
        <name>FMN</name>
        <dbReference type="ChEBI" id="CHEBI:58210"/>
    </ligand>
</feature>
<feature type="binding site" evidence="1">
    <location>
        <begin position="224"/>
        <end position="225"/>
    </location>
    <ligand>
        <name>FMN</name>
        <dbReference type="ChEBI" id="CHEBI:58210"/>
    </ligand>
</feature>
<feature type="site" description="Interacts with tRNA; defines subfamily-specific binding signature" evidence="1">
    <location>
        <position position="35"/>
    </location>
</feature>
<feature type="site" description="Interacts with tRNA" evidence="1">
    <location>
        <position position="95"/>
    </location>
</feature>
<feature type="site" description="Interacts with tRNA" evidence="1">
    <location>
        <position position="176"/>
    </location>
</feature>
<feature type="site" description="Interacts with tRNA; defines subfamily-specific binding signature" evidence="1">
    <location>
        <position position="272"/>
    </location>
</feature>
<feature type="site" description="Interacts with tRNA; defines subfamily-specific binding signature" evidence="1">
    <location>
        <position position="274"/>
    </location>
</feature>
<feature type="site" description="Interacts with tRNA" evidence="1">
    <location>
        <position position="279"/>
    </location>
</feature>
<feature type="site" description="Interacts with tRNA" evidence="1">
    <location>
        <position position="295"/>
    </location>
</feature>
<name>DUSC_PASMU</name>
<comment type="function">
    <text evidence="1">Catalyzes the synthesis of 5,6-dihydrouridine (D), a modified base found in the D-loop of most tRNAs, via the reduction of the C5-C6 double bond in target uridines. Specifically modifies U16 in tRNAs.</text>
</comment>
<comment type="catalytic activity">
    <reaction evidence="1">
        <text>5,6-dihydrouridine(16) in tRNA + NADP(+) = uridine(16) in tRNA + NADPH + H(+)</text>
        <dbReference type="Rhea" id="RHEA:53376"/>
        <dbReference type="Rhea" id="RHEA-COMP:13543"/>
        <dbReference type="Rhea" id="RHEA-COMP:13544"/>
        <dbReference type="ChEBI" id="CHEBI:15378"/>
        <dbReference type="ChEBI" id="CHEBI:57783"/>
        <dbReference type="ChEBI" id="CHEBI:58349"/>
        <dbReference type="ChEBI" id="CHEBI:65315"/>
        <dbReference type="ChEBI" id="CHEBI:74443"/>
    </reaction>
</comment>
<comment type="catalytic activity">
    <reaction evidence="1">
        <text>5,6-dihydrouridine(16) in tRNA + NAD(+) = uridine(16) in tRNA + NADH + H(+)</text>
        <dbReference type="Rhea" id="RHEA:53380"/>
        <dbReference type="Rhea" id="RHEA-COMP:13543"/>
        <dbReference type="Rhea" id="RHEA-COMP:13544"/>
        <dbReference type="ChEBI" id="CHEBI:15378"/>
        <dbReference type="ChEBI" id="CHEBI:57540"/>
        <dbReference type="ChEBI" id="CHEBI:57945"/>
        <dbReference type="ChEBI" id="CHEBI:65315"/>
        <dbReference type="ChEBI" id="CHEBI:74443"/>
    </reaction>
</comment>
<comment type="cofactor">
    <cofactor evidence="1">
        <name>FMN</name>
        <dbReference type="ChEBI" id="CHEBI:58210"/>
    </cofactor>
</comment>
<comment type="similarity">
    <text evidence="1">Belongs to the Dus family. DusC subfamily.</text>
</comment>
<dbReference type="EC" id="1.3.1.-" evidence="1"/>
<dbReference type="EMBL" id="AE004439">
    <property type="protein sequence ID" value="AAK03964.1"/>
    <property type="molecule type" value="Genomic_DNA"/>
</dbReference>
<dbReference type="RefSeq" id="WP_010907394.1">
    <property type="nucleotide sequence ID" value="NC_002663.1"/>
</dbReference>
<dbReference type="SMR" id="Q9CJW1"/>
<dbReference type="STRING" id="272843.PM1880"/>
<dbReference type="EnsemblBacteria" id="AAK03964">
    <property type="protein sequence ID" value="AAK03964"/>
    <property type="gene ID" value="PM1880"/>
</dbReference>
<dbReference type="KEGG" id="pmu:PM1880"/>
<dbReference type="PATRIC" id="fig|272843.6.peg.1902"/>
<dbReference type="HOGENOM" id="CLU_013299_0_4_6"/>
<dbReference type="OrthoDB" id="9764501at2"/>
<dbReference type="Proteomes" id="UP000000809">
    <property type="component" value="Chromosome"/>
</dbReference>
<dbReference type="GO" id="GO:0050660">
    <property type="term" value="F:flavin adenine dinucleotide binding"/>
    <property type="evidence" value="ECO:0007669"/>
    <property type="project" value="InterPro"/>
</dbReference>
<dbReference type="GO" id="GO:0010181">
    <property type="term" value="F:FMN binding"/>
    <property type="evidence" value="ECO:0007669"/>
    <property type="project" value="UniProtKB-UniRule"/>
</dbReference>
<dbReference type="GO" id="GO:0000049">
    <property type="term" value="F:tRNA binding"/>
    <property type="evidence" value="ECO:0007669"/>
    <property type="project" value="UniProtKB-UniRule"/>
</dbReference>
<dbReference type="GO" id="GO:0102262">
    <property type="term" value="F:tRNA-dihydrouridine16 synthase activity"/>
    <property type="evidence" value="ECO:0007669"/>
    <property type="project" value="RHEA"/>
</dbReference>
<dbReference type="CDD" id="cd02801">
    <property type="entry name" value="DUS_like_FMN"/>
    <property type="match status" value="1"/>
</dbReference>
<dbReference type="Gene3D" id="3.20.20.70">
    <property type="entry name" value="Aldolase class I"/>
    <property type="match status" value="1"/>
</dbReference>
<dbReference type="Gene3D" id="1.20.225.30">
    <property type="entry name" value="Dihydrouridine synthase, C-terminal recognition domain"/>
    <property type="match status" value="1"/>
</dbReference>
<dbReference type="HAMAP" id="MF_02043">
    <property type="entry name" value="DusC_subfam"/>
    <property type="match status" value="1"/>
</dbReference>
<dbReference type="InterPro" id="IPR013785">
    <property type="entry name" value="Aldolase_TIM"/>
</dbReference>
<dbReference type="InterPro" id="IPR035587">
    <property type="entry name" value="DUS-like_FMN-bd"/>
</dbReference>
<dbReference type="InterPro" id="IPR001269">
    <property type="entry name" value="DUS_fam"/>
</dbReference>
<dbReference type="InterPro" id="IPR032886">
    <property type="entry name" value="DusC"/>
</dbReference>
<dbReference type="InterPro" id="IPR042270">
    <property type="entry name" value="DusC_C"/>
</dbReference>
<dbReference type="InterPro" id="IPR018517">
    <property type="entry name" value="tRNA_hU_synthase_CS"/>
</dbReference>
<dbReference type="NCBIfam" id="NF007838">
    <property type="entry name" value="PRK10550.1"/>
    <property type="match status" value="1"/>
</dbReference>
<dbReference type="PANTHER" id="PTHR11082">
    <property type="entry name" value="TRNA-DIHYDROURIDINE SYNTHASE"/>
    <property type="match status" value="1"/>
</dbReference>
<dbReference type="PANTHER" id="PTHR11082:SF26">
    <property type="entry name" value="TRNA-DIHYDROURIDINE(16) SYNTHASE"/>
    <property type="match status" value="1"/>
</dbReference>
<dbReference type="Pfam" id="PF01207">
    <property type="entry name" value="Dus"/>
    <property type="match status" value="1"/>
</dbReference>
<dbReference type="PIRSF" id="PIRSF006621">
    <property type="entry name" value="Dus"/>
    <property type="match status" value="1"/>
</dbReference>
<dbReference type="SUPFAM" id="SSF51395">
    <property type="entry name" value="FMN-linked oxidoreductases"/>
    <property type="match status" value="1"/>
</dbReference>
<dbReference type="PROSITE" id="PS01136">
    <property type="entry name" value="UPF0034"/>
    <property type="match status" value="1"/>
</dbReference>